<protein>
    <recommendedName>
        <fullName evidence="1">Ribosomal RNA small subunit methyltransferase G</fullName>
        <ecNumber evidence="1">2.1.1.170</ecNumber>
    </recommendedName>
    <alternativeName>
        <fullName evidence="1">16S rRNA 7-methylguanosine methyltransferase</fullName>
        <shortName evidence="1">16S rRNA m7G methyltransferase</shortName>
    </alternativeName>
</protein>
<accession>Q92JI2</accession>
<evidence type="ECO:0000255" key="1">
    <source>
        <dbReference type="HAMAP-Rule" id="MF_00074"/>
    </source>
</evidence>
<gene>
    <name evidence="1" type="primary">rsmG</name>
    <name type="ordered locus">RC0085</name>
</gene>
<name>RSMG_RICCN</name>
<organism>
    <name type="scientific">Rickettsia conorii (strain ATCC VR-613 / Malish 7)</name>
    <dbReference type="NCBI Taxonomy" id="272944"/>
    <lineage>
        <taxon>Bacteria</taxon>
        <taxon>Pseudomonadati</taxon>
        <taxon>Pseudomonadota</taxon>
        <taxon>Alphaproteobacteria</taxon>
        <taxon>Rickettsiales</taxon>
        <taxon>Rickettsiaceae</taxon>
        <taxon>Rickettsieae</taxon>
        <taxon>Rickettsia</taxon>
        <taxon>spotted fever group</taxon>
    </lineage>
</organism>
<keyword id="KW-0963">Cytoplasm</keyword>
<keyword id="KW-0489">Methyltransferase</keyword>
<keyword id="KW-0698">rRNA processing</keyword>
<keyword id="KW-0949">S-adenosyl-L-methionine</keyword>
<keyword id="KW-0808">Transferase</keyword>
<proteinExistence type="inferred from homology"/>
<dbReference type="EC" id="2.1.1.170" evidence="1"/>
<dbReference type="EMBL" id="AE006914">
    <property type="protein sequence ID" value="AAL02623.1"/>
    <property type="molecule type" value="Genomic_DNA"/>
</dbReference>
<dbReference type="PIR" id="E97710">
    <property type="entry name" value="E97710"/>
</dbReference>
<dbReference type="SMR" id="Q92JI2"/>
<dbReference type="KEGG" id="rco:RC0085"/>
<dbReference type="HOGENOM" id="CLU_065341_1_1_5"/>
<dbReference type="Proteomes" id="UP000000816">
    <property type="component" value="Chromosome"/>
</dbReference>
<dbReference type="GO" id="GO:0005829">
    <property type="term" value="C:cytosol"/>
    <property type="evidence" value="ECO:0007669"/>
    <property type="project" value="TreeGrafter"/>
</dbReference>
<dbReference type="GO" id="GO:0070043">
    <property type="term" value="F:rRNA (guanine-N7-)-methyltransferase activity"/>
    <property type="evidence" value="ECO:0007669"/>
    <property type="project" value="UniProtKB-UniRule"/>
</dbReference>
<dbReference type="Gene3D" id="3.40.50.150">
    <property type="entry name" value="Vaccinia Virus protein VP39"/>
    <property type="match status" value="1"/>
</dbReference>
<dbReference type="HAMAP" id="MF_00074">
    <property type="entry name" value="16SrRNA_methyltr_G"/>
    <property type="match status" value="1"/>
</dbReference>
<dbReference type="InterPro" id="IPR003682">
    <property type="entry name" value="rRNA_ssu_MeTfrase_G"/>
</dbReference>
<dbReference type="InterPro" id="IPR029063">
    <property type="entry name" value="SAM-dependent_MTases_sf"/>
</dbReference>
<dbReference type="NCBIfam" id="TIGR00138">
    <property type="entry name" value="rsmG_gidB"/>
    <property type="match status" value="1"/>
</dbReference>
<dbReference type="PANTHER" id="PTHR31760">
    <property type="entry name" value="S-ADENOSYL-L-METHIONINE-DEPENDENT METHYLTRANSFERASES SUPERFAMILY PROTEIN"/>
    <property type="match status" value="1"/>
</dbReference>
<dbReference type="PANTHER" id="PTHR31760:SF0">
    <property type="entry name" value="S-ADENOSYL-L-METHIONINE-DEPENDENT METHYLTRANSFERASES SUPERFAMILY PROTEIN"/>
    <property type="match status" value="1"/>
</dbReference>
<dbReference type="Pfam" id="PF02527">
    <property type="entry name" value="GidB"/>
    <property type="match status" value="1"/>
</dbReference>
<dbReference type="PIRSF" id="PIRSF003078">
    <property type="entry name" value="GidB"/>
    <property type="match status" value="1"/>
</dbReference>
<dbReference type="SUPFAM" id="SSF53335">
    <property type="entry name" value="S-adenosyl-L-methionine-dependent methyltransferases"/>
    <property type="match status" value="1"/>
</dbReference>
<sequence length="192" mass="22084">MMEVPREIIEKLEIFQKLVKKWNKSINLVSDNTIHNFWQRHILDSLQLIQYIDNKEIHLVDIGSGSGLPGIVLSIAGVAQVSLIEADLRKCIFLEKASKISNNNIQIINQRIEKVEIDCSILTCRAFSNLNTIFNCIKNISVREKFLLLKGKNYLTEIVEAKERWLFGYLIHQSITCEEGKILEVSNLTKMI</sequence>
<reference key="1">
    <citation type="journal article" date="2001" name="Science">
        <title>Mechanisms of evolution in Rickettsia conorii and R. prowazekii.</title>
        <authorList>
            <person name="Ogata H."/>
            <person name="Audic S."/>
            <person name="Renesto-Audiffren P."/>
            <person name="Fournier P.-E."/>
            <person name="Barbe V."/>
            <person name="Samson D."/>
            <person name="Roux V."/>
            <person name="Cossart P."/>
            <person name="Weissenbach J."/>
            <person name="Claverie J.-M."/>
            <person name="Raoult D."/>
        </authorList>
    </citation>
    <scope>NUCLEOTIDE SEQUENCE [LARGE SCALE GENOMIC DNA]</scope>
    <source>
        <strain>ATCC VR-613 / Malish 7</strain>
    </source>
</reference>
<feature type="chain" id="PRO_0000184317" description="Ribosomal RNA small subunit methyltransferase G">
    <location>
        <begin position="1"/>
        <end position="192"/>
    </location>
</feature>
<feature type="binding site" evidence="1">
    <location>
        <position position="63"/>
    </location>
    <ligand>
        <name>S-adenosyl-L-methionine</name>
        <dbReference type="ChEBI" id="CHEBI:59789"/>
    </ligand>
</feature>
<feature type="binding site" evidence="1">
    <location>
        <position position="68"/>
    </location>
    <ligand>
        <name>S-adenosyl-L-methionine</name>
        <dbReference type="ChEBI" id="CHEBI:59789"/>
    </ligand>
</feature>
<feature type="binding site" evidence="1">
    <location>
        <begin position="112"/>
        <end position="113"/>
    </location>
    <ligand>
        <name>S-adenosyl-L-methionine</name>
        <dbReference type="ChEBI" id="CHEBI:59789"/>
    </ligand>
</feature>
<feature type="binding site" evidence="1">
    <location>
        <position position="125"/>
    </location>
    <ligand>
        <name>S-adenosyl-L-methionine</name>
        <dbReference type="ChEBI" id="CHEBI:59789"/>
    </ligand>
</feature>
<comment type="function">
    <text evidence="1">Specifically methylates the N7 position of guanine in position 527 of 16S rRNA.</text>
</comment>
<comment type="catalytic activity">
    <reaction evidence="1">
        <text>guanosine(527) in 16S rRNA + S-adenosyl-L-methionine = N(7)-methylguanosine(527) in 16S rRNA + S-adenosyl-L-homocysteine</text>
        <dbReference type="Rhea" id="RHEA:42732"/>
        <dbReference type="Rhea" id="RHEA-COMP:10209"/>
        <dbReference type="Rhea" id="RHEA-COMP:10210"/>
        <dbReference type="ChEBI" id="CHEBI:57856"/>
        <dbReference type="ChEBI" id="CHEBI:59789"/>
        <dbReference type="ChEBI" id="CHEBI:74269"/>
        <dbReference type="ChEBI" id="CHEBI:74480"/>
        <dbReference type="EC" id="2.1.1.170"/>
    </reaction>
</comment>
<comment type="subcellular location">
    <subcellularLocation>
        <location evidence="1">Cytoplasm</location>
    </subcellularLocation>
</comment>
<comment type="similarity">
    <text evidence="1">Belongs to the methyltransferase superfamily. RNA methyltransferase RsmG family.</text>
</comment>